<keyword id="KW-0067">ATP-binding</keyword>
<keyword id="KW-0963">Cytoplasm</keyword>
<keyword id="KW-0418">Kinase</keyword>
<keyword id="KW-0460">Magnesium</keyword>
<keyword id="KW-0479">Metal-binding</keyword>
<keyword id="KW-0547">Nucleotide-binding</keyword>
<keyword id="KW-1185">Reference proteome</keyword>
<keyword id="KW-0808">Transferase</keyword>
<dbReference type="EC" id="2.7.2.1" evidence="1"/>
<dbReference type="EMBL" id="CP001114">
    <property type="protein sequence ID" value="ACO47356.1"/>
    <property type="molecule type" value="Genomic_DNA"/>
</dbReference>
<dbReference type="RefSeq" id="WP_012694477.1">
    <property type="nucleotide sequence ID" value="NC_012526.1"/>
</dbReference>
<dbReference type="SMR" id="C1D087"/>
<dbReference type="STRING" id="546414.Deide_23220"/>
<dbReference type="PaxDb" id="546414-Deide_23220"/>
<dbReference type="KEGG" id="ddr:Deide_23220"/>
<dbReference type="eggNOG" id="COG0282">
    <property type="taxonomic scope" value="Bacteria"/>
</dbReference>
<dbReference type="HOGENOM" id="CLU_020352_0_1_0"/>
<dbReference type="OrthoDB" id="9802453at2"/>
<dbReference type="UniPathway" id="UPA00340">
    <property type="reaction ID" value="UER00458"/>
</dbReference>
<dbReference type="Proteomes" id="UP000002208">
    <property type="component" value="Chromosome"/>
</dbReference>
<dbReference type="GO" id="GO:0005829">
    <property type="term" value="C:cytosol"/>
    <property type="evidence" value="ECO:0007669"/>
    <property type="project" value="TreeGrafter"/>
</dbReference>
<dbReference type="GO" id="GO:0008776">
    <property type="term" value="F:acetate kinase activity"/>
    <property type="evidence" value="ECO:0007669"/>
    <property type="project" value="UniProtKB-UniRule"/>
</dbReference>
<dbReference type="GO" id="GO:0005524">
    <property type="term" value="F:ATP binding"/>
    <property type="evidence" value="ECO:0007669"/>
    <property type="project" value="UniProtKB-KW"/>
</dbReference>
<dbReference type="GO" id="GO:0000287">
    <property type="term" value="F:magnesium ion binding"/>
    <property type="evidence" value="ECO:0007669"/>
    <property type="project" value="UniProtKB-UniRule"/>
</dbReference>
<dbReference type="GO" id="GO:0006083">
    <property type="term" value="P:acetate metabolic process"/>
    <property type="evidence" value="ECO:0007669"/>
    <property type="project" value="TreeGrafter"/>
</dbReference>
<dbReference type="GO" id="GO:0006085">
    <property type="term" value="P:acetyl-CoA biosynthetic process"/>
    <property type="evidence" value="ECO:0007669"/>
    <property type="project" value="UniProtKB-UniRule"/>
</dbReference>
<dbReference type="CDD" id="cd24010">
    <property type="entry name" value="ASKHA_NBD_AcK_PK"/>
    <property type="match status" value="1"/>
</dbReference>
<dbReference type="Gene3D" id="3.30.420.40">
    <property type="match status" value="2"/>
</dbReference>
<dbReference type="HAMAP" id="MF_00020">
    <property type="entry name" value="Acetate_kinase"/>
    <property type="match status" value="1"/>
</dbReference>
<dbReference type="InterPro" id="IPR004372">
    <property type="entry name" value="Ac/propionate_kinase"/>
</dbReference>
<dbReference type="InterPro" id="IPR000890">
    <property type="entry name" value="Aliphatic_acid_kin_short-chain"/>
</dbReference>
<dbReference type="InterPro" id="IPR023865">
    <property type="entry name" value="Aliphatic_acid_kinase_CS"/>
</dbReference>
<dbReference type="InterPro" id="IPR043129">
    <property type="entry name" value="ATPase_NBD"/>
</dbReference>
<dbReference type="NCBIfam" id="TIGR00016">
    <property type="entry name" value="ackA"/>
    <property type="match status" value="1"/>
</dbReference>
<dbReference type="PANTHER" id="PTHR21060">
    <property type="entry name" value="ACETATE KINASE"/>
    <property type="match status" value="1"/>
</dbReference>
<dbReference type="PANTHER" id="PTHR21060:SF21">
    <property type="entry name" value="ACETATE KINASE"/>
    <property type="match status" value="1"/>
</dbReference>
<dbReference type="Pfam" id="PF00871">
    <property type="entry name" value="Acetate_kinase"/>
    <property type="match status" value="1"/>
</dbReference>
<dbReference type="PIRSF" id="PIRSF000722">
    <property type="entry name" value="Acetate_prop_kin"/>
    <property type="match status" value="1"/>
</dbReference>
<dbReference type="PRINTS" id="PR00471">
    <property type="entry name" value="ACETATEKNASE"/>
</dbReference>
<dbReference type="SUPFAM" id="SSF53067">
    <property type="entry name" value="Actin-like ATPase domain"/>
    <property type="match status" value="2"/>
</dbReference>
<dbReference type="PROSITE" id="PS01075">
    <property type="entry name" value="ACETATE_KINASE_1"/>
    <property type="match status" value="1"/>
</dbReference>
<dbReference type="PROSITE" id="PS01076">
    <property type="entry name" value="ACETATE_KINASE_2"/>
    <property type="match status" value="1"/>
</dbReference>
<comment type="function">
    <text evidence="1">Catalyzes the formation of acetyl phosphate from acetate and ATP. Can also catalyze the reverse reaction.</text>
</comment>
<comment type="catalytic activity">
    <reaction evidence="1">
        <text>acetate + ATP = acetyl phosphate + ADP</text>
        <dbReference type="Rhea" id="RHEA:11352"/>
        <dbReference type="ChEBI" id="CHEBI:22191"/>
        <dbReference type="ChEBI" id="CHEBI:30089"/>
        <dbReference type="ChEBI" id="CHEBI:30616"/>
        <dbReference type="ChEBI" id="CHEBI:456216"/>
        <dbReference type="EC" id="2.7.2.1"/>
    </reaction>
</comment>
<comment type="cofactor">
    <cofactor evidence="1">
        <name>Mg(2+)</name>
        <dbReference type="ChEBI" id="CHEBI:18420"/>
    </cofactor>
    <cofactor evidence="1">
        <name>Mn(2+)</name>
        <dbReference type="ChEBI" id="CHEBI:29035"/>
    </cofactor>
    <text evidence="1">Mg(2+). Can also accept Mn(2+).</text>
</comment>
<comment type="pathway">
    <text evidence="1">Metabolic intermediate biosynthesis; acetyl-CoA biosynthesis; acetyl-CoA from acetate: step 1/2.</text>
</comment>
<comment type="subunit">
    <text evidence="1">Homodimer.</text>
</comment>
<comment type="subcellular location">
    <subcellularLocation>
        <location evidence="1">Cytoplasm</location>
    </subcellularLocation>
</comment>
<comment type="similarity">
    <text evidence="1">Belongs to the acetokinase family.</text>
</comment>
<name>ACKA_DEIDV</name>
<evidence type="ECO:0000255" key="1">
    <source>
        <dbReference type="HAMAP-Rule" id="MF_00020"/>
    </source>
</evidence>
<organism>
    <name type="scientific">Deinococcus deserti (strain DSM 17065 / CIP 109153 / LMG 22923 / VCD115)</name>
    <dbReference type="NCBI Taxonomy" id="546414"/>
    <lineage>
        <taxon>Bacteria</taxon>
        <taxon>Thermotogati</taxon>
        <taxon>Deinococcota</taxon>
        <taxon>Deinococci</taxon>
        <taxon>Deinococcales</taxon>
        <taxon>Deinococcaceae</taxon>
        <taxon>Deinococcus</taxon>
    </lineage>
</organism>
<reference key="1">
    <citation type="journal article" date="2009" name="PLoS Genet.">
        <title>Alliance of proteomics and genomics to unravel the specificities of Sahara bacterium Deinococcus deserti.</title>
        <authorList>
            <person name="de Groot A."/>
            <person name="Dulermo R."/>
            <person name="Ortet P."/>
            <person name="Blanchard L."/>
            <person name="Guerin P."/>
            <person name="Fernandez B."/>
            <person name="Vacherie B."/>
            <person name="Dossat C."/>
            <person name="Jolivet E."/>
            <person name="Siguier P."/>
            <person name="Chandler M."/>
            <person name="Barakat M."/>
            <person name="Dedieu A."/>
            <person name="Barbe V."/>
            <person name="Heulin T."/>
            <person name="Sommer S."/>
            <person name="Achouak W."/>
            <person name="Armengaud J."/>
        </authorList>
    </citation>
    <scope>NUCLEOTIDE SEQUENCE [LARGE SCALE GENOMIC DNA]</scope>
    <source>
        <strain>DSM 17065 / CIP 109153 / LMG 22923 / VCD115</strain>
    </source>
</reference>
<gene>
    <name evidence="1" type="primary">ackA</name>
    <name type="ordered locus">Deide_23220</name>
</gene>
<feature type="chain" id="PRO_1000201901" description="Acetate kinase">
    <location>
        <begin position="1"/>
        <end position="400"/>
    </location>
</feature>
<feature type="active site" description="Proton donor/acceptor" evidence="1">
    <location>
        <position position="142"/>
    </location>
</feature>
<feature type="binding site" evidence="1">
    <location>
        <position position="7"/>
    </location>
    <ligand>
        <name>Mg(2+)</name>
        <dbReference type="ChEBI" id="CHEBI:18420"/>
    </ligand>
</feature>
<feature type="binding site" evidence="1">
    <location>
        <position position="14"/>
    </location>
    <ligand>
        <name>ATP</name>
        <dbReference type="ChEBI" id="CHEBI:30616"/>
    </ligand>
</feature>
<feature type="binding site" evidence="1">
    <location>
        <position position="85"/>
    </location>
    <ligand>
        <name>substrate</name>
    </ligand>
</feature>
<feature type="binding site" evidence="1">
    <location>
        <begin position="202"/>
        <end position="206"/>
    </location>
    <ligand>
        <name>ATP</name>
        <dbReference type="ChEBI" id="CHEBI:30616"/>
    </ligand>
</feature>
<feature type="binding site" evidence="1">
    <location>
        <begin position="278"/>
        <end position="280"/>
    </location>
    <ligand>
        <name>ATP</name>
        <dbReference type="ChEBI" id="CHEBI:30616"/>
    </ligand>
</feature>
<feature type="binding site" evidence="1">
    <location>
        <begin position="326"/>
        <end position="330"/>
    </location>
    <ligand>
        <name>ATP</name>
        <dbReference type="ChEBI" id="CHEBI:30616"/>
    </ligand>
</feature>
<feature type="binding site" evidence="1">
    <location>
        <position position="380"/>
    </location>
    <ligand>
        <name>Mg(2+)</name>
        <dbReference type="ChEBI" id="CHEBI:18420"/>
    </ligand>
</feature>
<feature type="site" description="Transition state stabilizer" evidence="1">
    <location>
        <position position="174"/>
    </location>
</feature>
<feature type="site" description="Transition state stabilizer" evidence="1">
    <location>
        <position position="235"/>
    </location>
</feature>
<protein>
    <recommendedName>
        <fullName evidence="1">Acetate kinase</fullName>
        <ecNumber evidence="1">2.7.2.1</ecNumber>
    </recommendedName>
    <alternativeName>
        <fullName evidence="1">Acetokinase</fullName>
    </alternativeName>
</protein>
<accession>C1D087</accession>
<sequence>MLTLVLNCGSSSVKFALLDLSANLTLLSGLAERLGSTGAVATLSRGENRRSVPVPDGSYAGAFEVVRAELGALGVREQVRAVGHRVVHGGERFSAPALIDAKVMAAIRACVPLAPLHNPANIAGIEAAQEAFGQLPHVAVFDTAFHQTMPDVAFRYAVPESWYAQHGVRRYGFHGTSHAYVAAEAARMLGMPLDALNLVTAHLGNGCSVAAVQGGRSIDTSMGLTPLEGLIMGTRSGDVDPGLHEFMARQAGLSLTQVTAALNKESGLSGLSGGLGSDMRELEAAAGRGHTGARLAVAAFVYRLAKGVAGMAVALGHLDALVFTGGIGENSATIRAATLERLGVLGFRLDQQANAQAVRGQPGLISAAGSVPALVVNTNEELSIARQTRQVLAAQTGDQA</sequence>
<proteinExistence type="inferred from homology"/>